<keyword id="KW-1003">Cell membrane</keyword>
<keyword id="KW-0204">Cytolysis</keyword>
<keyword id="KW-0472">Membrane</keyword>
<keyword id="KW-0812">Transmembrane</keyword>
<keyword id="KW-1133">Transmembrane helix</keyword>
<feature type="chain" id="PRO_0000213185" description="Holin-like protein CidA">
    <location>
        <begin position="1"/>
        <end position="130"/>
    </location>
</feature>
<feature type="transmembrane region" description="Helical" evidence="1">
    <location>
        <begin position="7"/>
        <end position="25"/>
    </location>
</feature>
<feature type="transmembrane region" description="Helical" evidence="1">
    <location>
        <begin position="30"/>
        <end position="49"/>
    </location>
</feature>
<feature type="transmembrane region" description="Helical" evidence="1">
    <location>
        <begin position="61"/>
        <end position="82"/>
    </location>
</feature>
<feature type="transmembrane region" description="Helical" evidence="1">
    <location>
        <begin position="92"/>
        <end position="114"/>
    </location>
</feature>
<sequence length="130" mass="14514">MEKAKFVIKLILQLALIMLITFIGTEVQKLLHIPLAGSIVGLMLFFLLLQFKIVPESWINVGADFLLKTMVFFFIPSVVGIMDVASNITMNYILFFIVIIIGTCLVALSSGYIAEKMLEKSNTRKGTDHS</sequence>
<protein>
    <recommendedName>
        <fullName evidence="1">Holin-like protein CidA</fullName>
    </recommendedName>
</protein>
<comment type="function">
    <text evidence="1">Increases the activity of extracellular murein hydrolases possibly by mediating their export via hole formation. Inhibited by the antiholin-like proteins LrgAB. In an unstressed cell, the LrgAB products probably inhibit the function of the CidAB proteins. When a cell is stressed by the addition of antibiotics or by other factors in the environment, the CidAB proteins possibly oligomerize within the bacterial cell membrane, creating lesions that disrupt the proton motive force, which in turn results in loss of cell viability. These lesions are also hypothesized to regulate the subsequent cell lysis by either allowing the murein hydrolases access to the cell wall substrate and/or regulating their activity by a possible change in the cell wall pH that results from loss of membrane potential.</text>
</comment>
<comment type="subcellular location">
    <subcellularLocation>
        <location evidence="1">Cell membrane</location>
        <topology evidence="1">Multi-pass membrane protein</topology>
    </subcellularLocation>
</comment>
<comment type="similarity">
    <text evidence="1">Belongs to the CidA/LrgA family. CidA subfamily.</text>
</comment>
<gene>
    <name evidence="1" type="primary">cidA</name>
    <name type="ordered locus">SE_2105</name>
</gene>
<organism>
    <name type="scientific">Staphylococcus epidermidis (strain ATCC 12228 / FDA PCI 1200)</name>
    <dbReference type="NCBI Taxonomy" id="176280"/>
    <lineage>
        <taxon>Bacteria</taxon>
        <taxon>Bacillati</taxon>
        <taxon>Bacillota</taxon>
        <taxon>Bacilli</taxon>
        <taxon>Bacillales</taxon>
        <taxon>Staphylococcaceae</taxon>
        <taxon>Staphylococcus</taxon>
    </lineage>
</organism>
<dbReference type="EMBL" id="AE015929">
    <property type="protein sequence ID" value="AAO05747.1"/>
    <property type="molecule type" value="Genomic_DNA"/>
</dbReference>
<dbReference type="RefSeq" id="NP_765660.1">
    <property type="nucleotide sequence ID" value="NC_004461.1"/>
</dbReference>
<dbReference type="RefSeq" id="WP_001832353.1">
    <property type="nucleotide sequence ID" value="NZ_WBME01000013.1"/>
</dbReference>
<dbReference type="SMR" id="Q8CR38"/>
<dbReference type="KEGG" id="sep:SE_2105"/>
<dbReference type="PATRIC" id="fig|176280.10.peg.2056"/>
<dbReference type="eggNOG" id="COG1380">
    <property type="taxonomic scope" value="Bacteria"/>
</dbReference>
<dbReference type="HOGENOM" id="CLU_113736_2_1_9"/>
<dbReference type="OrthoDB" id="3176438at2"/>
<dbReference type="Proteomes" id="UP000001411">
    <property type="component" value="Chromosome"/>
</dbReference>
<dbReference type="GO" id="GO:0005886">
    <property type="term" value="C:plasma membrane"/>
    <property type="evidence" value="ECO:0007669"/>
    <property type="project" value="UniProtKB-SubCell"/>
</dbReference>
<dbReference type="GO" id="GO:0019835">
    <property type="term" value="P:cytolysis"/>
    <property type="evidence" value="ECO:0007669"/>
    <property type="project" value="UniProtKB-UniRule"/>
</dbReference>
<dbReference type="GO" id="GO:0031640">
    <property type="term" value="P:killing of cells of another organism"/>
    <property type="evidence" value="ECO:0007669"/>
    <property type="project" value="UniProtKB-KW"/>
</dbReference>
<dbReference type="GO" id="GO:0012501">
    <property type="term" value="P:programmed cell death"/>
    <property type="evidence" value="ECO:0007669"/>
    <property type="project" value="UniProtKB-UniRule"/>
</dbReference>
<dbReference type="HAMAP" id="MF_01143">
    <property type="entry name" value="CidA"/>
    <property type="match status" value="1"/>
</dbReference>
<dbReference type="InterPro" id="IPR023760">
    <property type="entry name" value="Holin-like_CidA"/>
</dbReference>
<dbReference type="InterPro" id="IPR005538">
    <property type="entry name" value="LrgA/CidA"/>
</dbReference>
<dbReference type="PANTHER" id="PTHR33931:SF2">
    <property type="entry name" value="HOLIN-LIKE PROTEIN CIDA"/>
    <property type="match status" value="1"/>
</dbReference>
<dbReference type="PANTHER" id="PTHR33931">
    <property type="entry name" value="HOLIN-LIKE PROTEIN CIDA-RELATED"/>
    <property type="match status" value="1"/>
</dbReference>
<dbReference type="Pfam" id="PF03788">
    <property type="entry name" value="LrgA"/>
    <property type="match status" value="1"/>
</dbReference>
<reference key="1">
    <citation type="journal article" date="2003" name="Mol. Microbiol.">
        <title>Genome-based analysis of virulence genes in a non-biofilm-forming Staphylococcus epidermidis strain (ATCC 12228).</title>
        <authorList>
            <person name="Zhang Y.-Q."/>
            <person name="Ren S.-X."/>
            <person name="Li H.-L."/>
            <person name="Wang Y.-X."/>
            <person name="Fu G."/>
            <person name="Yang J."/>
            <person name="Qin Z.-Q."/>
            <person name="Miao Y.-G."/>
            <person name="Wang W.-Y."/>
            <person name="Chen R.-S."/>
            <person name="Shen Y."/>
            <person name="Chen Z."/>
            <person name="Yuan Z.-H."/>
            <person name="Zhao G.-P."/>
            <person name="Qu D."/>
            <person name="Danchin A."/>
            <person name="Wen Y.-M."/>
        </authorList>
    </citation>
    <scope>NUCLEOTIDE SEQUENCE [LARGE SCALE GENOMIC DNA]</scope>
    <source>
        <strain>ATCC 12228 / FDA PCI 1200</strain>
    </source>
</reference>
<proteinExistence type="inferred from homology"/>
<evidence type="ECO:0000255" key="1">
    <source>
        <dbReference type="HAMAP-Rule" id="MF_01143"/>
    </source>
</evidence>
<name>CIDA_STAES</name>
<accession>Q8CR38</accession>